<dbReference type="EC" id="6.3.4.-" evidence="1"/>
<dbReference type="EMBL" id="AP008937">
    <property type="protein sequence ID" value="BAG27637.1"/>
    <property type="molecule type" value="Genomic_DNA"/>
</dbReference>
<dbReference type="RefSeq" id="WP_003686221.1">
    <property type="nucleotide sequence ID" value="NC_010610.1"/>
</dbReference>
<dbReference type="SMR" id="B2GDA5"/>
<dbReference type="KEGG" id="lfe:LAF_1301"/>
<dbReference type="eggNOG" id="COG1323">
    <property type="taxonomic scope" value="Bacteria"/>
</dbReference>
<dbReference type="HOGENOM" id="CLU_038915_0_2_9"/>
<dbReference type="Proteomes" id="UP000001697">
    <property type="component" value="Chromosome"/>
</dbReference>
<dbReference type="GO" id="GO:0005737">
    <property type="term" value="C:cytoplasm"/>
    <property type="evidence" value="ECO:0007669"/>
    <property type="project" value="UniProtKB-SubCell"/>
</dbReference>
<dbReference type="GO" id="GO:0005524">
    <property type="term" value="F:ATP binding"/>
    <property type="evidence" value="ECO:0007669"/>
    <property type="project" value="UniProtKB-KW"/>
</dbReference>
<dbReference type="GO" id="GO:0016879">
    <property type="term" value="F:ligase activity, forming carbon-nitrogen bonds"/>
    <property type="evidence" value="ECO:0007669"/>
    <property type="project" value="UniProtKB-UniRule"/>
</dbReference>
<dbReference type="GO" id="GO:0000049">
    <property type="term" value="F:tRNA binding"/>
    <property type="evidence" value="ECO:0007669"/>
    <property type="project" value="UniProtKB-KW"/>
</dbReference>
<dbReference type="GO" id="GO:0006400">
    <property type="term" value="P:tRNA modification"/>
    <property type="evidence" value="ECO:0007669"/>
    <property type="project" value="UniProtKB-UniRule"/>
</dbReference>
<dbReference type="Gene3D" id="3.40.50.620">
    <property type="entry name" value="HUPs"/>
    <property type="match status" value="1"/>
</dbReference>
<dbReference type="HAMAP" id="MF_01539">
    <property type="entry name" value="TmcAL"/>
    <property type="match status" value="1"/>
</dbReference>
<dbReference type="InterPro" id="IPR014729">
    <property type="entry name" value="Rossmann-like_a/b/a_fold"/>
</dbReference>
<dbReference type="InterPro" id="IPR008513">
    <property type="entry name" value="tRNA(Met)_cyd_acetate_ligase"/>
</dbReference>
<dbReference type="NCBIfam" id="NF010191">
    <property type="entry name" value="PRK13670.1"/>
    <property type="match status" value="1"/>
</dbReference>
<dbReference type="PANTHER" id="PTHR37825">
    <property type="entry name" value="TRNA(MET) CYTIDINE ACETATE LIGASE"/>
    <property type="match status" value="1"/>
</dbReference>
<dbReference type="PANTHER" id="PTHR37825:SF1">
    <property type="entry name" value="TRNA(MET) CYTIDINE ACETATE LIGASE"/>
    <property type="match status" value="1"/>
</dbReference>
<dbReference type="Pfam" id="PF05636">
    <property type="entry name" value="HIGH_NTase1"/>
    <property type="match status" value="1"/>
</dbReference>
<dbReference type="SUPFAM" id="SSF52374">
    <property type="entry name" value="Nucleotidylyl transferase"/>
    <property type="match status" value="1"/>
</dbReference>
<name>TMCAL_LIMF3</name>
<evidence type="ECO:0000255" key="1">
    <source>
        <dbReference type="HAMAP-Rule" id="MF_01539"/>
    </source>
</evidence>
<feature type="chain" id="PRO_1000198856" description="tRNA(Met) cytidine acetate ligase">
    <location>
        <begin position="1"/>
        <end position="375"/>
    </location>
</feature>
<feature type="binding site" evidence="1">
    <location>
        <begin position="7"/>
        <end position="20"/>
    </location>
    <ligand>
        <name>ATP</name>
        <dbReference type="ChEBI" id="CHEBI:30616"/>
    </ligand>
</feature>
<feature type="binding site" evidence="1">
    <location>
        <position position="101"/>
    </location>
    <ligand>
        <name>ATP</name>
        <dbReference type="ChEBI" id="CHEBI:30616"/>
    </ligand>
</feature>
<feature type="binding site" evidence="1">
    <location>
        <position position="151"/>
    </location>
    <ligand>
        <name>ATP</name>
        <dbReference type="ChEBI" id="CHEBI:30616"/>
    </ligand>
</feature>
<feature type="binding site" evidence="1">
    <location>
        <position position="176"/>
    </location>
    <ligand>
        <name>ATP</name>
        <dbReference type="ChEBI" id="CHEBI:30616"/>
    </ligand>
</feature>
<accession>B2GDA5</accession>
<proteinExistence type="inferred from homology"/>
<gene>
    <name evidence="1" type="primary">tmcAL</name>
    <name type="ordered locus">LAF_1301</name>
</gene>
<comment type="function">
    <text evidence="1">Catalyzes the formation of N(4)-acetylcytidine (ac(4)C) at the wobble position of elongator tRNA(Met), using acetate and ATP as substrates. First activates an acetate ion to form acetyladenylate (Ac-AMP) and then transfers the acetyl group to tRNA to form ac(4)C34.</text>
</comment>
<comment type="catalytic activity">
    <reaction evidence="1">
        <text>cytidine(34) in elongator tRNA(Met) + acetate + ATP = N(4)-acetylcytidine(34) in elongator tRNA(Met) + AMP + diphosphate</text>
        <dbReference type="Rhea" id="RHEA:58144"/>
        <dbReference type="Rhea" id="RHEA-COMP:10693"/>
        <dbReference type="Rhea" id="RHEA-COMP:10694"/>
        <dbReference type="ChEBI" id="CHEBI:30089"/>
        <dbReference type="ChEBI" id="CHEBI:30616"/>
        <dbReference type="ChEBI" id="CHEBI:33019"/>
        <dbReference type="ChEBI" id="CHEBI:74900"/>
        <dbReference type="ChEBI" id="CHEBI:82748"/>
        <dbReference type="ChEBI" id="CHEBI:456215"/>
    </reaction>
</comment>
<comment type="subcellular location">
    <subcellularLocation>
        <location evidence="1">Cytoplasm</location>
    </subcellularLocation>
</comment>
<comment type="similarity">
    <text evidence="1">Belongs to the TmcAL family.</text>
</comment>
<reference key="1">
    <citation type="journal article" date="2008" name="DNA Res.">
        <title>Comparative genome analysis of Lactobacillus reuteri and Lactobacillus fermentum reveal a genomic island for reuterin and cobalamin production.</title>
        <authorList>
            <person name="Morita H."/>
            <person name="Toh H."/>
            <person name="Fukuda S."/>
            <person name="Horikawa H."/>
            <person name="Oshima K."/>
            <person name="Suzuki T."/>
            <person name="Murakami M."/>
            <person name="Hisamatsu S."/>
            <person name="Kato Y."/>
            <person name="Takizawa T."/>
            <person name="Fukuoka H."/>
            <person name="Yoshimura T."/>
            <person name="Itoh K."/>
            <person name="O'Sullivan D.J."/>
            <person name="McKay L.L."/>
            <person name="Ohno H."/>
            <person name="Kikuchi J."/>
            <person name="Masaoka T."/>
            <person name="Hattori M."/>
        </authorList>
    </citation>
    <scope>NUCLEOTIDE SEQUENCE [LARGE SCALE GENOMIC DNA]</scope>
    <source>
        <strain>NBRC 3956 / LMG 18251</strain>
    </source>
</reference>
<sequence>MKAVGLVVEYNPFHNGHRYHLAQAKRLTGADVVVAVMSGDFTQRGEPTILDKWSRTLAALQNGVDLVVELPVADAVQPAHRFAMGALSLLNDLQVADVVFGAEHPDWDFAAMVKAEQDFNQAAFHQFNNTYATQFNQQLEAVTGHALTDPNDILAFAYHRAKAAGDFGFHLQPIQRVDNHYADQQLTGAISSAGAIRQAVKGHQDVTETVPVQTASALAKLTTIPNWEQLYPLLANHLIQTPAPLLEQTYQVKEGLENRLKEAAERHRDFTSFLKAVKTKRYTYGRLMRVAFYLTLNLSDQDMANYHPYHRVLGFTAAGQAYLHQVKKELSYPLITKVNQRMKNAELALDYRAGKLYQFFGTPEQDLTRGPIRLV</sequence>
<keyword id="KW-0067">ATP-binding</keyword>
<keyword id="KW-0963">Cytoplasm</keyword>
<keyword id="KW-0436">Ligase</keyword>
<keyword id="KW-0547">Nucleotide-binding</keyword>
<keyword id="KW-1185">Reference proteome</keyword>
<keyword id="KW-0694">RNA-binding</keyword>
<keyword id="KW-0819">tRNA processing</keyword>
<keyword id="KW-0820">tRNA-binding</keyword>
<protein>
    <recommendedName>
        <fullName evidence="1">tRNA(Met) cytidine acetate ligase</fullName>
        <ecNumber evidence="1">6.3.4.-</ecNumber>
    </recommendedName>
</protein>
<organism>
    <name type="scientific">Limosilactobacillus fermentum (strain NBRC 3956 / LMG 18251)</name>
    <name type="common">Lactobacillus fermentum</name>
    <dbReference type="NCBI Taxonomy" id="334390"/>
    <lineage>
        <taxon>Bacteria</taxon>
        <taxon>Bacillati</taxon>
        <taxon>Bacillota</taxon>
        <taxon>Bacilli</taxon>
        <taxon>Lactobacillales</taxon>
        <taxon>Lactobacillaceae</taxon>
        <taxon>Limosilactobacillus</taxon>
    </lineage>
</organism>